<name>YHFG_ECOLI</name>
<reference key="1">
    <citation type="journal article" date="1989" name="J. Bacteriol.">
        <title>Nucleotide sequences of fic and fic-1 genes involved in cell filamentation induced by cyclic AMP in Escherichia coli.</title>
        <authorList>
            <person name="Kawamukai M."/>
            <person name="Matsuda H."/>
            <person name="Fujii W."/>
            <person name="Utsumi R."/>
            <person name="Komano T."/>
        </authorList>
    </citation>
    <scope>NUCLEOTIDE SEQUENCE [GENOMIC DNA]</scope>
</reference>
<reference key="2">
    <citation type="journal article" date="1990" name="J. Bacteriol.">
        <title>Chromosomal organization and expression of Escherichia coli pabA.</title>
        <authorList>
            <person name="Tran P.V."/>
            <person name="Bannor T.A."/>
            <person name="Doktor S.Z."/>
            <person name="Nichols B.P."/>
        </authorList>
    </citation>
    <scope>NUCLEOTIDE SEQUENCE [GENOMIC DNA]</scope>
</reference>
<reference key="3">
    <citation type="journal article" date="1997" name="Science">
        <title>The complete genome sequence of Escherichia coli K-12.</title>
        <authorList>
            <person name="Blattner F.R."/>
            <person name="Plunkett G. III"/>
            <person name="Bloch C.A."/>
            <person name="Perna N.T."/>
            <person name="Burland V."/>
            <person name="Riley M."/>
            <person name="Collado-Vides J."/>
            <person name="Glasner J.D."/>
            <person name="Rode C.K."/>
            <person name="Mayhew G.F."/>
            <person name="Gregor J."/>
            <person name="Davis N.W."/>
            <person name="Kirkpatrick H.A."/>
            <person name="Goeden M.A."/>
            <person name="Rose D.J."/>
            <person name="Mau B."/>
            <person name="Shao Y."/>
        </authorList>
    </citation>
    <scope>NUCLEOTIDE SEQUENCE [LARGE SCALE GENOMIC DNA]</scope>
    <source>
        <strain>K12 / MG1655 / ATCC 47076</strain>
    </source>
</reference>
<reference key="4">
    <citation type="journal article" date="2006" name="Mol. Syst. Biol.">
        <title>Highly accurate genome sequences of Escherichia coli K-12 strains MG1655 and W3110.</title>
        <authorList>
            <person name="Hayashi K."/>
            <person name="Morooka N."/>
            <person name="Yamamoto Y."/>
            <person name="Fujita K."/>
            <person name="Isono K."/>
            <person name="Choi S."/>
            <person name="Ohtsubo E."/>
            <person name="Baba T."/>
            <person name="Wanner B.L."/>
            <person name="Mori H."/>
            <person name="Horiuchi T."/>
        </authorList>
    </citation>
    <scope>NUCLEOTIDE SEQUENCE [LARGE SCALE GENOMIC DNA]</scope>
    <source>
        <strain>K12 / W3110 / ATCC 27325 / DSM 5911</strain>
    </source>
</reference>
<reference key="5">
    <citation type="journal article" date="1994" name="Nucleic Acids Res.">
        <title>Intrinsic and extrinsic approaches for detecting genes in a bacterial genome.</title>
        <authorList>
            <person name="Borodovsky M."/>
            <person name="Rudd K.E."/>
            <person name="Koonin E.V."/>
        </authorList>
    </citation>
    <scope>IDENTIFICATION</scope>
</reference>
<keyword id="KW-0002">3D-structure</keyword>
<keyword id="KW-1185">Reference proteome</keyword>
<organism>
    <name type="scientific">Escherichia coli (strain K12)</name>
    <dbReference type="NCBI Taxonomy" id="83333"/>
    <lineage>
        <taxon>Bacteria</taxon>
        <taxon>Pseudomonadati</taxon>
        <taxon>Pseudomonadota</taxon>
        <taxon>Gammaproteobacteria</taxon>
        <taxon>Enterobacterales</taxon>
        <taxon>Enterobacteriaceae</taxon>
        <taxon>Escherichia</taxon>
    </lineage>
</organism>
<evidence type="ECO:0007829" key="1">
    <source>
        <dbReference type="PDB" id="5JFF"/>
    </source>
</evidence>
<gene>
    <name type="primary">yhfG</name>
    <name type="ordered locus">b3362</name>
    <name type="ordered locus">JW3325</name>
</gene>
<proteinExistence type="evidence at protein level"/>
<dbReference type="EMBL" id="M32354">
    <property type="protein sequence ID" value="AAA24262.1"/>
    <property type="molecule type" value="Genomic_DNA"/>
</dbReference>
<dbReference type="EMBL" id="M28363">
    <property type="status" value="NOT_ANNOTATED_CDS"/>
    <property type="molecule type" value="Genomic_DNA"/>
</dbReference>
<dbReference type="EMBL" id="U18997">
    <property type="protein sequence ID" value="AAA58159.1"/>
    <property type="molecule type" value="Genomic_DNA"/>
</dbReference>
<dbReference type="EMBL" id="U00096">
    <property type="protein sequence ID" value="AAC76387.1"/>
    <property type="molecule type" value="Genomic_DNA"/>
</dbReference>
<dbReference type="EMBL" id="AP009048">
    <property type="protein sequence ID" value="BAE77928.1"/>
    <property type="molecule type" value="Genomic_DNA"/>
</dbReference>
<dbReference type="PIR" id="JV0064">
    <property type="entry name" value="JV0064"/>
</dbReference>
<dbReference type="RefSeq" id="NP_417821.1">
    <property type="nucleotide sequence ID" value="NC_000913.3"/>
</dbReference>
<dbReference type="RefSeq" id="WP_000736862.1">
    <property type="nucleotide sequence ID" value="NZ_SSZK01000008.1"/>
</dbReference>
<dbReference type="PDB" id="5JFF">
    <property type="method" value="X-ray"/>
    <property type="resolution" value="2.00 A"/>
    <property type="chains" value="B/D=2-55"/>
</dbReference>
<dbReference type="PDB" id="5JFZ">
    <property type="method" value="X-ray"/>
    <property type="resolution" value="2.40 A"/>
    <property type="chains" value="B/D/F=2-55"/>
</dbReference>
<dbReference type="PDBsum" id="5JFF"/>
<dbReference type="PDBsum" id="5JFZ"/>
<dbReference type="SMR" id="P0ADX5"/>
<dbReference type="BioGRID" id="4261084">
    <property type="interactions" value="120"/>
</dbReference>
<dbReference type="BioGRID" id="852182">
    <property type="interactions" value="1"/>
</dbReference>
<dbReference type="DIP" id="DIP-48177N"/>
<dbReference type="FunCoup" id="P0ADX5">
    <property type="interactions" value="30"/>
</dbReference>
<dbReference type="IntAct" id="P0ADX5">
    <property type="interactions" value="1"/>
</dbReference>
<dbReference type="STRING" id="511145.b3362"/>
<dbReference type="jPOST" id="P0ADX5"/>
<dbReference type="PaxDb" id="511145-b3362"/>
<dbReference type="EnsemblBacteria" id="AAC76387">
    <property type="protein sequence ID" value="AAC76387"/>
    <property type="gene ID" value="b3362"/>
</dbReference>
<dbReference type="GeneID" id="947871"/>
<dbReference type="KEGG" id="ecj:JW3325"/>
<dbReference type="KEGG" id="eco:b3362"/>
<dbReference type="KEGG" id="ecoc:C3026_18260"/>
<dbReference type="PATRIC" id="fig|1411691.4.peg.3368"/>
<dbReference type="EchoBASE" id="EB2277"/>
<dbReference type="eggNOG" id="ENOG50337I4">
    <property type="taxonomic scope" value="Bacteria"/>
</dbReference>
<dbReference type="HOGENOM" id="CLU_188462_1_0_6"/>
<dbReference type="InParanoid" id="P0ADX5"/>
<dbReference type="OMA" id="WDAQKNQ"/>
<dbReference type="OrthoDB" id="6505648at2"/>
<dbReference type="BioCyc" id="EcoCyc:EG12374-MONOMER"/>
<dbReference type="PRO" id="PR:P0ADX5"/>
<dbReference type="Proteomes" id="UP000000625">
    <property type="component" value="Chromosome"/>
</dbReference>
<dbReference type="InterPro" id="IPR022541">
    <property type="entry name" value="YhfG"/>
</dbReference>
<dbReference type="NCBIfam" id="NF007573">
    <property type="entry name" value="PRK10204.1"/>
    <property type="match status" value="1"/>
</dbReference>
<dbReference type="Pfam" id="PF10832">
    <property type="entry name" value="YhfG"/>
    <property type="match status" value="1"/>
</dbReference>
<accession>P0ADX5</accession>
<accession>P37770</accession>
<accession>Q2M728</accession>
<sequence length="55" mass="6599">MKKLTDKQKSRLWELQRNRNFQASRRLEGVEMPLVTLTAAEALARLEELRSHYER</sequence>
<protein>
    <recommendedName>
        <fullName>Uncharacterized protein YhfG</fullName>
    </recommendedName>
</protein>
<feature type="chain" id="PRO_0000169520" description="Uncharacterized protein YhfG">
    <location>
        <begin position="1"/>
        <end position="55"/>
    </location>
</feature>
<feature type="helix" evidence="1">
    <location>
        <begin position="6"/>
        <end position="26"/>
    </location>
</feature>
<feature type="turn" evidence="1">
    <location>
        <begin position="27"/>
        <end position="29"/>
    </location>
</feature>
<feature type="helix" evidence="1">
    <location>
        <begin position="39"/>
        <end position="52"/>
    </location>
</feature>